<dbReference type="EMBL" id="U73484">
    <property type="protein sequence ID" value="AAB50139.1"/>
    <property type="molecule type" value="mRNA"/>
</dbReference>
<dbReference type="EMBL" id="U73485">
    <property type="protein sequence ID" value="AAB50140.1"/>
    <property type="molecule type" value="mRNA"/>
</dbReference>
<dbReference type="EMBL" id="U73483">
    <property type="protein sequence ID" value="AAB50138.1"/>
    <property type="molecule type" value="mRNA"/>
</dbReference>
<dbReference type="EMBL" id="U73486">
    <property type="protein sequence ID" value="AAB50141.1"/>
    <property type="molecule type" value="mRNA"/>
</dbReference>
<dbReference type="EMBL" id="U73487">
    <property type="protein sequence ID" value="AAB50142.1"/>
    <property type="molecule type" value="mRNA"/>
</dbReference>
<dbReference type="CCDS" id="CCDS19096.1">
    <molecule id="O08532-2"/>
</dbReference>
<dbReference type="CCDS" id="CCDS51421.1">
    <molecule id="O08532-1"/>
</dbReference>
<dbReference type="CCDS" id="CCDS51422.1">
    <molecule id="O08532-5"/>
</dbReference>
<dbReference type="CCDS" id="CCDS51423.1">
    <molecule id="O08532-4"/>
</dbReference>
<dbReference type="CCDS" id="CCDS80212.1">
    <molecule id="O08532-3"/>
</dbReference>
<dbReference type="RefSeq" id="NP_001104313.1">
    <molecule id="O08532-1"/>
    <property type="nucleotide sequence ID" value="NM_001110843.1"/>
</dbReference>
<dbReference type="RefSeq" id="NP_001104314.1">
    <molecule id="O08532-5"/>
    <property type="nucleotide sequence ID" value="NM_001110844.1"/>
</dbReference>
<dbReference type="RefSeq" id="NP_001104315.1">
    <molecule id="O08532-4"/>
    <property type="nucleotide sequence ID" value="NM_001110845.1"/>
</dbReference>
<dbReference type="RefSeq" id="NP_001104316.1">
    <molecule id="O08532-3"/>
    <property type="nucleotide sequence ID" value="NM_001110846.1"/>
</dbReference>
<dbReference type="RefSeq" id="NP_033914.1">
    <molecule id="O08532-2"/>
    <property type="nucleotide sequence ID" value="NM_009784.2"/>
</dbReference>
<dbReference type="SMR" id="O08532"/>
<dbReference type="BioGRID" id="198437">
    <property type="interactions" value="8"/>
</dbReference>
<dbReference type="ComplexPortal" id="CPX-3191">
    <property type="entry name" value="Cav1.1 voltage-gated calcium channel complex, CACNA2D1-CACNB1-CACNG1 variant"/>
</dbReference>
<dbReference type="ComplexPortal" id="CPX-3194">
    <property type="entry name" value="Cav1.2 voltage-gated calcium channel complex, CACNA2D1-CACNB2 variant"/>
</dbReference>
<dbReference type="FunCoup" id="O08532">
    <property type="interactions" value="646"/>
</dbReference>
<dbReference type="IntAct" id="O08532">
    <property type="interactions" value="8"/>
</dbReference>
<dbReference type="MINT" id="O08532"/>
<dbReference type="STRING" id="10090.ENSMUSP00000049457"/>
<dbReference type="BindingDB" id="O08532"/>
<dbReference type="ChEMBL" id="CHEMBL4676"/>
<dbReference type="DrugCentral" id="O08532"/>
<dbReference type="GlyConnect" id="2415">
    <molecule id="O08532-4"/>
    <property type="glycosylation" value="20 N-Linked glycans (10 sites)"/>
</dbReference>
<dbReference type="GlyCosmos" id="O08532">
    <property type="glycosylation" value="8 sites, 10 glycans"/>
</dbReference>
<dbReference type="GlyGen" id="O08532">
    <property type="glycosylation" value="15 sites, 19 N-linked glycans (11 sites), 1 O-linked glycan (1 site)"/>
</dbReference>
<dbReference type="iPTMnet" id="O08532"/>
<dbReference type="PhosphoSitePlus" id="O08532"/>
<dbReference type="SwissPalm" id="O08532"/>
<dbReference type="jPOST" id="O08532"/>
<dbReference type="PaxDb" id="10090-ENSMUSP00000049457"/>
<dbReference type="PeptideAtlas" id="O08532"/>
<dbReference type="ProteomicsDB" id="265477">
    <molecule id="O08532-1"/>
</dbReference>
<dbReference type="ProteomicsDB" id="265478">
    <molecule id="O08532-2"/>
</dbReference>
<dbReference type="ProteomicsDB" id="265479">
    <molecule id="O08532-3"/>
</dbReference>
<dbReference type="ProteomicsDB" id="265480">
    <molecule id="O08532-4"/>
</dbReference>
<dbReference type="ProteomicsDB" id="265481">
    <molecule id="O08532-5"/>
</dbReference>
<dbReference type="Pumba" id="O08532"/>
<dbReference type="Antibodypedia" id="2200">
    <property type="antibodies" value="280 antibodies from 34 providers"/>
</dbReference>
<dbReference type="DNASU" id="12293"/>
<dbReference type="Ensembl" id="ENSMUST00000039370.14">
    <molecule id="O08532-1"/>
    <property type="protein sequence ID" value="ENSMUSP00000049457.8"/>
    <property type="gene ID" value="ENSMUSG00000040118.17"/>
</dbReference>
<dbReference type="Ensembl" id="ENSMUST00000078272.13">
    <molecule id="O08532-2"/>
    <property type="protein sequence ID" value="ENSMUSP00000077391.7"/>
    <property type="gene ID" value="ENSMUSG00000040118.17"/>
</dbReference>
<dbReference type="Ensembl" id="ENSMUST00000101581.10">
    <molecule id="O08532-5"/>
    <property type="protein sequence ID" value="ENSMUSP00000099117.4"/>
    <property type="gene ID" value="ENSMUSG00000040118.17"/>
</dbReference>
<dbReference type="Ensembl" id="ENSMUST00000180204.8">
    <molecule id="O08532-4"/>
    <property type="protein sequence ID" value="ENSMUSP00000136260.2"/>
    <property type="gene ID" value="ENSMUSG00000040118.17"/>
</dbReference>
<dbReference type="Ensembl" id="ENSMUST00000199704.5">
    <molecule id="O08532-3"/>
    <property type="protein sequence ID" value="ENSMUSP00000142881.2"/>
    <property type="gene ID" value="ENSMUSG00000040118.17"/>
</dbReference>
<dbReference type="GeneID" id="12293"/>
<dbReference type="KEGG" id="mmu:12293"/>
<dbReference type="UCSC" id="uc008wmx.2">
    <molecule id="O08532-2"/>
    <property type="organism name" value="mouse"/>
</dbReference>
<dbReference type="UCSC" id="uc008wmy.2">
    <molecule id="O08532-5"/>
    <property type="organism name" value="mouse"/>
</dbReference>
<dbReference type="UCSC" id="uc008wna.2">
    <molecule id="O08532-1"/>
    <property type="organism name" value="mouse"/>
</dbReference>
<dbReference type="UCSC" id="uc008wnb.2">
    <molecule id="O08532-3"/>
    <property type="organism name" value="mouse"/>
</dbReference>
<dbReference type="AGR" id="MGI:88295"/>
<dbReference type="CTD" id="781"/>
<dbReference type="MGI" id="MGI:88295">
    <property type="gene designation" value="Cacna2d1"/>
</dbReference>
<dbReference type="VEuPathDB" id="HostDB:ENSMUSG00000040118"/>
<dbReference type="eggNOG" id="KOG2353">
    <property type="taxonomic scope" value="Eukaryota"/>
</dbReference>
<dbReference type="GeneTree" id="ENSGT00940000155209"/>
<dbReference type="InParanoid" id="O08532"/>
<dbReference type="OMA" id="NRTKTHQ"/>
<dbReference type="OrthoDB" id="10054666at2759"/>
<dbReference type="PhylomeDB" id="O08532"/>
<dbReference type="TreeFam" id="TF315824"/>
<dbReference type="BioGRID-ORCS" id="12293">
    <property type="hits" value="2 hits in 77 CRISPR screens"/>
</dbReference>
<dbReference type="CD-CODE" id="05A797AF">
    <property type="entry name" value="Presynaptic clusters"/>
</dbReference>
<dbReference type="ChiTaRS" id="Cacna2d1">
    <property type="organism name" value="mouse"/>
</dbReference>
<dbReference type="PRO" id="PR:O08532"/>
<dbReference type="Proteomes" id="UP000000589">
    <property type="component" value="Chromosome 5"/>
</dbReference>
<dbReference type="RNAct" id="O08532">
    <property type="molecule type" value="protein"/>
</dbReference>
<dbReference type="Bgee" id="ENSMUSG00000040118">
    <property type="expression patterns" value="Expressed in triceps brachii and 233 other cell types or tissues"/>
</dbReference>
<dbReference type="ExpressionAtlas" id="O08532">
    <property type="expression patterns" value="baseline and differential"/>
</dbReference>
<dbReference type="GO" id="GO:0098982">
    <property type="term" value="C:GABA-ergic synapse"/>
    <property type="evidence" value="ECO:0000314"/>
    <property type="project" value="SynGO"/>
</dbReference>
<dbReference type="GO" id="GO:1990454">
    <property type="term" value="C:L-type voltage-gated calcium channel complex"/>
    <property type="evidence" value="ECO:0000250"/>
    <property type="project" value="BHF-UCL"/>
</dbReference>
<dbReference type="GO" id="GO:0098992">
    <property type="term" value="C:neuronal dense core vesicle"/>
    <property type="evidence" value="ECO:0000314"/>
    <property type="project" value="SynGO"/>
</dbReference>
<dbReference type="GO" id="GO:0005886">
    <property type="term" value="C:plasma membrane"/>
    <property type="evidence" value="ECO:0000304"/>
    <property type="project" value="Reactome"/>
</dbReference>
<dbReference type="GO" id="GO:0048787">
    <property type="term" value="C:presynaptic active zone membrane"/>
    <property type="evidence" value="ECO:0000314"/>
    <property type="project" value="SynGO"/>
</dbReference>
<dbReference type="GO" id="GO:0016529">
    <property type="term" value="C:sarcoplasmic reticulum"/>
    <property type="evidence" value="ECO:0000314"/>
    <property type="project" value="MGI"/>
</dbReference>
<dbReference type="GO" id="GO:0030315">
    <property type="term" value="C:T-tubule"/>
    <property type="evidence" value="ECO:0000314"/>
    <property type="project" value="MGI"/>
</dbReference>
<dbReference type="GO" id="GO:0005891">
    <property type="term" value="C:voltage-gated calcium channel complex"/>
    <property type="evidence" value="ECO:0000315"/>
    <property type="project" value="MGI"/>
</dbReference>
<dbReference type="GO" id="GO:0046872">
    <property type="term" value="F:metal ion binding"/>
    <property type="evidence" value="ECO:0007669"/>
    <property type="project" value="UniProtKB-KW"/>
</dbReference>
<dbReference type="GO" id="GO:0086057">
    <property type="term" value="F:voltage-gated calcium channel activity involved in bundle of His cell action potential"/>
    <property type="evidence" value="ECO:0007669"/>
    <property type="project" value="Ensembl"/>
</dbReference>
<dbReference type="GO" id="GO:0070588">
    <property type="term" value="P:calcium ion transmembrane transport"/>
    <property type="evidence" value="ECO:0000250"/>
    <property type="project" value="BHF-UCL"/>
</dbReference>
<dbReference type="GO" id="GO:0061577">
    <property type="term" value="P:calcium ion transmembrane transport via high voltage-gated calcium channel"/>
    <property type="evidence" value="ECO:0000250"/>
    <property type="project" value="BHF-UCL"/>
</dbReference>
<dbReference type="GO" id="GO:0060402">
    <property type="term" value="P:calcium ion transport into cytosol"/>
    <property type="evidence" value="ECO:0000250"/>
    <property type="project" value="BHF-UCL"/>
</dbReference>
<dbReference type="GO" id="GO:0086002">
    <property type="term" value="P:cardiac muscle cell action potential involved in contraction"/>
    <property type="evidence" value="ECO:0000250"/>
    <property type="project" value="BHF-UCL"/>
</dbReference>
<dbReference type="GO" id="GO:1904646">
    <property type="term" value="P:cellular response to amyloid-beta"/>
    <property type="evidence" value="ECO:0007669"/>
    <property type="project" value="Ensembl"/>
</dbReference>
<dbReference type="GO" id="GO:1902514">
    <property type="term" value="P:regulation of calcium ion transmembrane transport via high voltage-gated calcium channel"/>
    <property type="evidence" value="ECO:0007669"/>
    <property type="project" value="Ensembl"/>
</dbReference>
<dbReference type="GO" id="GO:0051924">
    <property type="term" value="P:regulation of calcium ion transport"/>
    <property type="evidence" value="ECO:0000315"/>
    <property type="project" value="MGI"/>
</dbReference>
<dbReference type="GO" id="GO:0086091">
    <property type="term" value="P:regulation of heart rate by cardiac conduction"/>
    <property type="evidence" value="ECO:0000250"/>
    <property type="project" value="BHF-UCL"/>
</dbReference>
<dbReference type="GO" id="GO:0098903">
    <property type="term" value="P:regulation of membrane repolarization during action potential"/>
    <property type="evidence" value="ECO:0000250"/>
    <property type="project" value="BHF-UCL"/>
</dbReference>
<dbReference type="GO" id="GO:0060307">
    <property type="term" value="P:regulation of ventricular cardiac muscle cell membrane repolarization"/>
    <property type="evidence" value="ECO:0000250"/>
    <property type="project" value="BHF-UCL"/>
</dbReference>
<dbReference type="CDD" id="cd01463">
    <property type="entry name" value="vWA_VGCC_like"/>
    <property type="match status" value="1"/>
</dbReference>
<dbReference type="FunFam" id="3.30.450.20:FF:000014">
    <property type="entry name" value="voltage-dependent calcium channel subunit alpha-2/delta-1 isoform X1"/>
    <property type="match status" value="1"/>
</dbReference>
<dbReference type="FunFam" id="3.40.50.410:FF:000006">
    <property type="entry name" value="voltage-dependent calcium channel subunit alpha-2/delta-1 isoform X1"/>
    <property type="match status" value="1"/>
</dbReference>
<dbReference type="Gene3D" id="3.30.450.20">
    <property type="entry name" value="PAS domain"/>
    <property type="match status" value="1"/>
</dbReference>
<dbReference type="Gene3D" id="3.40.50.410">
    <property type="entry name" value="von Willebrand factor, type A domain"/>
    <property type="match status" value="1"/>
</dbReference>
<dbReference type="InterPro" id="IPR051173">
    <property type="entry name" value="Ca_channel_alpha-2/delta"/>
</dbReference>
<dbReference type="InterPro" id="IPR013680">
    <property type="entry name" value="VDCC_a2/dsu"/>
</dbReference>
<dbReference type="InterPro" id="IPR013608">
    <property type="entry name" value="VWA_N"/>
</dbReference>
<dbReference type="InterPro" id="IPR002035">
    <property type="entry name" value="VWF_A"/>
</dbReference>
<dbReference type="InterPro" id="IPR036465">
    <property type="entry name" value="vWFA_dom_sf"/>
</dbReference>
<dbReference type="PANTHER" id="PTHR10166">
    <property type="entry name" value="VOLTAGE-DEPENDENT CALCIUM CHANNEL SUBUNIT ALPHA-2/DELTA-RELATED"/>
    <property type="match status" value="1"/>
</dbReference>
<dbReference type="PANTHER" id="PTHR10166:SF6">
    <property type="entry name" value="VOLTAGE-DEPENDENT CALCIUM CHANNEL SUBUNIT ALPHA-2_DELTA-1"/>
    <property type="match status" value="1"/>
</dbReference>
<dbReference type="Pfam" id="PF08473">
    <property type="entry name" value="VGCC_alpha2"/>
    <property type="match status" value="1"/>
</dbReference>
<dbReference type="Pfam" id="PF00092">
    <property type="entry name" value="VWA"/>
    <property type="match status" value="1"/>
</dbReference>
<dbReference type="Pfam" id="PF08399">
    <property type="entry name" value="VWA_N"/>
    <property type="match status" value="1"/>
</dbReference>
<dbReference type="SMART" id="SM00327">
    <property type="entry name" value="VWA"/>
    <property type="match status" value="1"/>
</dbReference>
<dbReference type="SUPFAM" id="SSF53300">
    <property type="entry name" value="vWA-like"/>
    <property type="match status" value="1"/>
</dbReference>
<dbReference type="PROSITE" id="PS50234">
    <property type="entry name" value="VWFA"/>
    <property type="match status" value="1"/>
</dbReference>
<organism>
    <name type="scientific">Mus musculus</name>
    <name type="common">Mouse</name>
    <dbReference type="NCBI Taxonomy" id="10090"/>
    <lineage>
        <taxon>Eukaryota</taxon>
        <taxon>Metazoa</taxon>
        <taxon>Chordata</taxon>
        <taxon>Craniata</taxon>
        <taxon>Vertebrata</taxon>
        <taxon>Euteleostomi</taxon>
        <taxon>Mammalia</taxon>
        <taxon>Eutheria</taxon>
        <taxon>Euarchontoglires</taxon>
        <taxon>Glires</taxon>
        <taxon>Rodentia</taxon>
        <taxon>Myomorpha</taxon>
        <taxon>Muroidea</taxon>
        <taxon>Muridae</taxon>
        <taxon>Murinae</taxon>
        <taxon>Mus</taxon>
        <taxon>Mus</taxon>
    </lineage>
</organism>
<gene>
    <name type="primary">Cacna2d1</name>
    <name type="synonym">Cacna2</name>
</gene>
<proteinExistence type="evidence at protein level"/>
<comment type="function">
    <text evidence="2">The alpha-2/delta subunit of voltage-dependent calcium channels regulates calcium current density and activation/inactivation kinetics of the calcium channel (By similarity). Plays an important role in excitation-contraction coupling (By similarity).</text>
</comment>
<comment type="subunit">
    <text evidence="1">Dimer formed of alpha-2-1 and delta-1 chains; disulfide-linked. Voltage-dependent calcium channels are multisubunit complexes, consisting of alpha-1 (CACNA1), alpha-2 (CACNA2D), beta (CACNB) and delta (CACNA2D) subunits in a 1:1:1:1 ratio (By similarity).</text>
</comment>
<comment type="interaction">
    <interactant intactId="EBI-770939">
        <id>O08532</id>
    </interactant>
    <interactant intactId="EBI-768613">
        <id>P04925</id>
        <label>Prnp</label>
    </interactant>
    <organismsDiffer>false</organismsDiffer>
    <experiments>3</experiments>
</comment>
<comment type="subcellular location">
    <subcellularLocation>
        <location evidence="8">Membrane</location>
        <topology evidence="8">Single-pass type I membrane protein</topology>
    </subcellularLocation>
    <subcellularLocation>
        <location evidence="2">Cell membrane</location>
    </subcellularLocation>
</comment>
<comment type="alternative products">
    <event type="alternative splicing"/>
    <isoform>
        <id>O08532-1</id>
        <name>2A</name>
        <sequence type="displayed"/>
    </isoform>
    <isoform>
        <id>O08532-2</id>
        <name>2B</name>
        <sequence type="described" ref="VSP_050444"/>
    </isoform>
    <isoform>
        <id>O08532-3</id>
        <name>2C</name>
        <sequence type="described" ref="VSP_050445"/>
    </isoform>
    <isoform>
        <id>O08532-4</id>
        <name>2D</name>
        <sequence type="described" ref="VSP_050445 VSP_050446"/>
    </isoform>
    <isoform>
        <id>O08532-5</id>
        <name>2E</name>
        <sequence type="described" ref="VSP_050444 VSP_050446"/>
    </isoform>
</comment>
<comment type="tissue specificity">
    <text>Isoform 2A is expressed in skeletal muscle and aorta. Isoform 2B is expressed in brain. Isoform 2C is expressed in heart. Isoform 2D is expressed in heart and smooth muscle. Isoform 2E is expressed in smooth muscle. All five isoforms are expressed in the cardiovascular system.</text>
</comment>
<comment type="domain">
    <text evidence="1">The MIDAS-like motif in the VWFA domain binds divalent metal cations and is required to promote trafficking of the alpha-1 (CACNA1) subunit to the plasma membrane by an integrin-like switch.</text>
</comment>
<comment type="PTM">
    <text evidence="1">Proteolytically processed into subunits alpha-2-1 and delta-1 that are disulfide-linked.</text>
</comment>
<comment type="miscellaneous">
    <text evidence="1">Binds gabapentin, an antiepileptic drug.</text>
</comment>
<comment type="similarity">
    <text evidence="8">Belongs to the calcium channel subunit alpha-2/delta family.</text>
</comment>
<reference key="1">
    <citation type="journal article" date="1996" name="FEBS Lett.">
        <title>Tissue-specific expression of splice variants of the mouse voltage-gated calcium channel alpha2/delta subunit.</title>
        <authorList>
            <person name="Angelotti T."/>
            <person name="Hofmann F."/>
        </authorList>
    </citation>
    <scope>NUCLEOTIDE SEQUENCE [MRNA]</scope>
    <source>
        <tissue>Brain</tissue>
    </source>
</reference>
<reference key="2">
    <citation type="journal article" date="2006" name="Mol. Cell. Proteomics">
        <title>Comprehensive identification of phosphorylation sites in postsynaptic density preparations.</title>
        <authorList>
            <person name="Trinidad J.C."/>
            <person name="Specht C.G."/>
            <person name="Thalhammer A."/>
            <person name="Schoepfer R."/>
            <person name="Burlingame A.L."/>
        </authorList>
    </citation>
    <scope>IDENTIFICATION BY MASS SPECTROMETRY [LARGE SCALE ANALYSIS]</scope>
    <source>
        <tissue>Brain</tissue>
    </source>
</reference>
<reference key="3">
    <citation type="journal article" date="2009" name="Mol. Cell. Proteomics">
        <title>The mouse C2C12 myoblast cell surface N-linked glycoproteome: identification, glycosite occupancy, and membrane orientation.</title>
        <authorList>
            <person name="Gundry R.L."/>
            <person name="Raginski K."/>
            <person name="Tarasova Y."/>
            <person name="Tchernyshyov I."/>
            <person name="Bausch-Fluck D."/>
            <person name="Elliott S.T."/>
            <person name="Boheler K.R."/>
            <person name="Van Eyk J.E."/>
            <person name="Wollscheid B."/>
        </authorList>
    </citation>
    <scope>GLYCOSYLATION [LARGE SCALE ANALYSIS] AT ASN-136; ASN-324 AND ASN-781</scope>
    <source>
        <tissue>Myoblast</tissue>
    </source>
</reference>
<reference key="4">
    <citation type="journal article" date="2009" name="Nat. Biotechnol.">
        <title>Mass-spectrometric identification and relative quantification of N-linked cell surface glycoproteins.</title>
        <authorList>
            <person name="Wollscheid B."/>
            <person name="Bausch-Fluck D."/>
            <person name="Henderson C."/>
            <person name="O'Brien R."/>
            <person name="Bibel M."/>
            <person name="Schiess R."/>
            <person name="Aebersold R."/>
            <person name="Watts J.D."/>
        </authorList>
    </citation>
    <scope>GLYCOSYLATION [LARGE SCALE ANALYSIS] AT ASN-136 AND ASN-781</scope>
</reference>
<reference key="5">
    <citation type="journal article" date="2010" name="Cell">
        <title>A tissue-specific atlas of mouse protein phosphorylation and expression.</title>
        <authorList>
            <person name="Huttlin E.L."/>
            <person name="Jedrychowski M.P."/>
            <person name="Elias J.E."/>
            <person name="Goswami T."/>
            <person name="Rad R."/>
            <person name="Beausoleil S.A."/>
            <person name="Villen J."/>
            <person name="Haas W."/>
            <person name="Sowa M.E."/>
            <person name="Gygi S.P."/>
        </authorList>
    </citation>
    <scope>IDENTIFICATION BY MASS SPECTROMETRY [LARGE SCALE ANALYSIS]</scope>
    <source>
        <tissue>Brain</tissue>
        <tissue>Brown adipose tissue</tissue>
        <tissue>Heart</tissue>
        <tissue>Kidney</tissue>
        <tissue>Lung</tissue>
        <tissue>Spleen</tissue>
    </source>
</reference>
<name>CA2D1_MOUSE</name>
<keyword id="KW-0025">Alternative splicing</keyword>
<keyword id="KW-0106">Calcium</keyword>
<keyword id="KW-0107">Calcium channel</keyword>
<keyword id="KW-0109">Calcium transport</keyword>
<keyword id="KW-1003">Cell membrane</keyword>
<keyword id="KW-1015">Disulfide bond</keyword>
<keyword id="KW-0325">Glycoprotein</keyword>
<keyword id="KW-0407">Ion channel</keyword>
<keyword id="KW-0406">Ion transport</keyword>
<keyword id="KW-0472">Membrane</keyword>
<keyword id="KW-0479">Metal-binding</keyword>
<keyword id="KW-0597">Phosphoprotein</keyword>
<keyword id="KW-1185">Reference proteome</keyword>
<keyword id="KW-0732">Signal</keyword>
<keyword id="KW-0812">Transmembrane</keyword>
<keyword id="KW-1133">Transmembrane helix</keyword>
<keyword id="KW-0813">Transport</keyword>
<keyword id="KW-0851">Voltage-gated channel</keyword>
<feature type="signal peptide" evidence="1">
    <location>
        <begin position="1"/>
        <end position="24"/>
    </location>
</feature>
<feature type="chain" id="PRO_0000304634" description="Voltage-dependent calcium channel subunit alpha-2/delta-1">
    <location>
        <begin position="25"/>
        <end position="1103"/>
    </location>
</feature>
<feature type="chain" id="PRO_0000005003" description="Voltage-dependent calcium channel subunit alpha-2-1">
    <location>
        <begin position="25"/>
        <end position="957"/>
    </location>
</feature>
<feature type="chain" id="PRO_0000005004" description="Voltage-dependent calcium channel subunit delta-1">
    <location>
        <begin position="958"/>
        <end position="1103"/>
    </location>
</feature>
<feature type="topological domain" description="Extracellular" evidence="4">
    <location>
        <begin position="25"/>
        <end position="1073"/>
    </location>
</feature>
<feature type="transmembrane region" description="Helical" evidence="4">
    <location>
        <begin position="1074"/>
        <end position="1094"/>
    </location>
</feature>
<feature type="topological domain" description="Cytoplasmic" evidence="4">
    <location>
        <begin position="1095"/>
        <end position="1103"/>
    </location>
</feature>
<feature type="domain" description="VWFA" evidence="5">
    <location>
        <begin position="253"/>
        <end position="430"/>
    </location>
</feature>
<feature type="domain" description="Cache">
    <location>
        <begin position="446"/>
        <end position="537"/>
    </location>
</feature>
<feature type="short sequence motif" description="MIDAS-like motif">
    <location>
        <begin position="259"/>
        <end position="263"/>
    </location>
</feature>
<feature type="binding site" evidence="1">
    <location>
        <position position="259"/>
    </location>
    <ligand>
        <name>a divalent metal cation</name>
        <dbReference type="ChEBI" id="CHEBI:60240"/>
    </ligand>
</feature>
<feature type="binding site" evidence="1">
    <location>
        <position position="261"/>
    </location>
    <ligand>
        <name>a divalent metal cation</name>
        <dbReference type="ChEBI" id="CHEBI:60240"/>
    </ligand>
</feature>
<feature type="binding site" evidence="1">
    <location>
        <position position="263"/>
    </location>
    <ligand>
        <name>a divalent metal cation</name>
        <dbReference type="ChEBI" id="CHEBI:60240"/>
    </ligand>
</feature>
<feature type="modified residue" description="Phosphoserine" evidence="3">
    <location>
        <position position="119"/>
    </location>
</feature>
<feature type="glycosylation site" description="N-linked (GlcNAc...) asparagine" evidence="4">
    <location>
        <position position="92"/>
    </location>
</feature>
<feature type="glycosylation site" description="N-linked (GlcNAc...) asparagine" evidence="6 7">
    <location>
        <position position="136"/>
    </location>
</feature>
<feature type="glycosylation site" description="N-linked (GlcNAc...) asparagine" evidence="4">
    <location>
        <position position="184"/>
    </location>
</feature>
<feature type="glycosylation site" description="N-linked (GlcNAc...) asparagine" evidence="7">
    <location>
        <position position="324"/>
    </location>
</feature>
<feature type="glycosylation site" description="N-linked (GlcNAc...) asparagine" evidence="4">
    <location>
        <position position="348"/>
    </location>
</feature>
<feature type="glycosylation site" description="N-linked (GlcNAc...) asparagine" evidence="4">
    <location>
        <position position="613"/>
    </location>
</feature>
<feature type="glycosylation site" description="N-linked (GlcNAc...) asparagine" evidence="6 7">
    <location>
        <position position="781"/>
    </location>
</feature>
<feature type="glycosylation site" description="N-linked (GlcNAc...) asparagine" evidence="4">
    <location>
        <position position="888"/>
    </location>
</feature>
<feature type="disulfide bond" description="Interchain (between alpha-2-1 and delta-1 chains)" evidence="1">
    <location>
        <begin position="404"/>
        <end position="1059"/>
    </location>
</feature>
<feature type="splice variant" id="VSP_050445" description="In isoform 2C and isoform 2D." evidence="8">
    <location>
        <begin position="531"/>
        <end position="554"/>
    </location>
</feature>
<feature type="splice variant" id="VSP_050444" description="In isoform 2B and isoform 2E." evidence="8">
    <location>
        <begin position="531"/>
        <end position="549"/>
    </location>
</feature>
<feature type="splice variant" id="VSP_050446" description="In isoform 2D and isoform 2E." evidence="8">
    <original>Y</original>
    <variation>SKKGKMKD</variation>
    <location>
        <position position="644"/>
    </location>
</feature>
<evidence type="ECO:0000250" key="1"/>
<evidence type="ECO:0000250" key="2">
    <source>
        <dbReference type="UniProtKB" id="P54289"/>
    </source>
</evidence>
<evidence type="ECO:0000250" key="3">
    <source>
        <dbReference type="UniProtKB" id="P54290"/>
    </source>
</evidence>
<evidence type="ECO:0000255" key="4"/>
<evidence type="ECO:0000255" key="5">
    <source>
        <dbReference type="PROSITE-ProRule" id="PRU00219"/>
    </source>
</evidence>
<evidence type="ECO:0000269" key="6">
    <source>
    </source>
</evidence>
<evidence type="ECO:0000269" key="7">
    <source>
    </source>
</evidence>
<evidence type="ECO:0000305" key="8"/>
<sequence length="1103" mass="124630">MAAGCLLALTLTLFQSGLIGPSSEEPFPSPVTIKSWVDKMQEDLVTLAKTASGVTQLADIYEKYQDLYTVEPNNARQLVEIAARDIEKLLSNRSKALVRLAMEAEKVQAAHQWREDFASNEVVYYNAKDDLDPERNESEPGSQRIKPVFIEDANFGRQISYQHAAVHIPTDIYEGSTIVLNELNWTSALDEVFKRNRDEDPTLLWQVFGSATGLARYYPASPWVDNSRTPNKIDLYDVRRRPWYIQGAASPKDMLILVDVSGSVSGLTLKLIRTSVSEMLETLSDDDFVNVASFNSNAQDVSCFQHLVQANVRNKKVLKDAVNNITAKGITDYKKGFSFAFEQLLNYNVSRANCNKIIMLFTDGGEERAQEIFAKYNKDKKVRVFTFSVGQHNYDRGPIQWMACENKGYYYEIPSIGAIRINTQEYLDVLGRPMVLAGDKAKQVQWTNVYLDALELGLVITGTLPVFNVTGQSENKTNLKNQLILGVMGVDVSLEDIKRLTPRFTLCPNGYYFAIDPNGYVLLHPNLQPKPIGVGIPTINLRKRRPNVQNPKSQEPVTLDFLDAELENEIKVEIRNKMIDGESGEKTFRTLVKSQDERYIDKGNRTYTWTPVNGTDYSLALVLPTYSFYYIKAKLEETITQARYSETLKPDNFEESGYTFIAPREYCNDLKPSDNNTEFLLNFNEFIDRKTPNNPSCNTDLINRILLDAGFTNELVQNYWSKQKNIKGVKARFVVTDGGITRVYPKEAGENWQENPETYEDSFYKRSLDNDNYVFTAPYFNKSGPGAYESGIMVSKAVELYIQGKLLKPAVVGIKIDVNSWIENFTKTSIRDPCAGPVCDCKRNSDVMDCVILDDGGFLLMANHDDYTNQIGRFFGEIDPSMMRHLVNISLYAFNKSYDYQSVCDPGAAPKQGAGHRSAYVPSIADILQIGWWATAAAWSILQQLLLSLTFPRLLEAVEMEEDDFTASLSKQSCITEQTQYFFKNDTKSFSGLLDCGNCSRIFHVEKLMNTNLVFIMVESKGTCPCDTRLLMQAEQTSDGPDPCDMVKQPRYRKGPDVCFDNNVLEDYTDCGGVSGLNPSLWSIFGLQFILLWLVSGSRHYLL</sequence>
<accession>O08532</accession>
<accession>O08533</accession>
<accession>O08534</accession>
<accession>O08535</accession>
<accession>O08536</accession>
<protein>
    <recommendedName>
        <fullName>Voltage-dependent calcium channel subunit alpha-2/delta-1</fullName>
    </recommendedName>
    <alternativeName>
        <fullName>Voltage-gated calcium channel subunit alpha-2/delta-1</fullName>
    </alternativeName>
    <component>
        <recommendedName>
            <fullName>Voltage-dependent calcium channel subunit alpha-2-1</fullName>
        </recommendedName>
    </component>
    <component>
        <recommendedName>
            <fullName>Voltage-dependent calcium channel subunit delta-1</fullName>
        </recommendedName>
    </component>
</protein>